<feature type="chain" id="PRO_0000377748" description="Short neurotoxin D2A" evidence="2">
    <location>
        <begin position="1"/>
        <end position="47" status="greater than"/>
    </location>
</feature>
<feature type="disulfide bond" evidence="1">
    <location>
        <begin position="3"/>
        <end position="24"/>
    </location>
</feature>
<feature type="disulfide bond" evidence="1">
    <location>
        <begin position="17"/>
        <end position="39"/>
    </location>
</feature>
<feature type="non-terminal residue">
    <location>
        <position position="47"/>
    </location>
</feature>
<name>3SO3_MICPY</name>
<comment type="subcellular location">
    <subcellularLocation>
        <location evidence="2">Secreted</location>
    </subcellularLocation>
</comment>
<comment type="tissue specificity">
    <text evidence="3">Expressed by the venom gland.</text>
</comment>
<comment type="mass spectrometry"/>
<comment type="similarity">
    <text evidence="3">Belongs to the three-finger toxin family. Short-chain subfamily. Orphan group III sub-subfamily.</text>
</comment>
<organism>
    <name type="scientific">Micrurus pyrrhocryptus</name>
    <name type="common">Coral snake</name>
    <dbReference type="NCBI Taxonomy" id="129468"/>
    <lineage>
        <taxon>Eukaryota</taxon>
        <taxon>Metazoa</taxon>
        <taxon>Chordata</taxon>
        <taxon>Craniata</taxon>
        <taxon>Vertebrata</taxon>
        <taxon>Euteleostomi</taxon>
        <taxon>Lepidosauria</taxon>
        <taxon>Squamata</taxon>
        <taxon>Bifurcata</taxon>
        <taxon>Unidentata</taxon>
        <taxon>Episquamata</taxon>
        <taxon>Toxicofera</taxon>
        <taxon>Serpentes</taxon>
        <taxon>Colubroidea</taxon>
        <taxon>Elapidae</taxon>
        <taxon>Elapinae</taxon>
        <taxon>Micrurus</taxon>
    </lineage>
</organism>
<reference key="1">
    <citation type="journal article" date="2009" name="Toxicon">
        <title>Biochemical characterization of the Micrurus pyrrhocryptus venom.</title>
        <authorList>
            <person name="Dokmetjian J.C."/>
            <person name="Del Canto S."/>
            <person name="Vinzon S."/>
            <person name="de Jimenez Bonino M.B."/>
        </authorList>
    </citation>
    <scope>PROTEIN SEQUENCE</scope>
    <scope>MASS SPECTROMETRY</scope>
    <scope>SUBCELLULAR LOCATION</scope>
    <source>
        <tissue>Venom</tissue>
    </source>
</reference>
<keyword id="KW-0903">Direct protein sequencing</keyword>
<keyword id="KW-1015">Disulfide bond</keyword>
<keyword id="KW-0964">Secreted</keyword>
<keyword id="KW-0800">Toxin</keyword>
<evidence type="ECO:0000250" key="1">
    <source>
        <dbReference type="UniProtKB" id="P83346"/>
    </source>
</evidence>
<evidence type="ECO:0000269" key="2">
    <source>
    </source>
</evidence>
<evidence type="ECO:0000305" key="3"/>
<sequence>LLCLQKYSPGRETSQTCLAGENICFKKWKKGEKTSRXGCAVTCPKXK</sequence>
<accession>P0CAR2</accession>
<dbReference type="GO" id="GO:0005576">
    <property type="term" value="C:extracellular region"/>
    <property type="evidence" value="ECO:0007669"/>
    <property type="project" value="UniProtKB-SubCell"/>
</dbReference>
<dbReference type="GO" id="GO:0090729">
    <property type="term" value="F:toxin activity"/>
    <property type="evidence" value="ECO:0007669"/>
    <property type="project" value="UniProtKB-KW"/>
</dbReference>
<dbReference type="CDD" id="cd00206">
    <property type="entry name" value="TFP_snake_toxin"/>
    <property type="match status" value="1"/>
</dbReference>
<dbReference type="Gene3D" id="2.10.60.10">
    <property type="entry name" value="CD59"/>
    <property type="match status" value="1"/>
</dbReference>
<dbReference type="InterPro" id="IPR003571">
    <property type="entry name" value="Snake_3FTx"/>
</dbReference>
<dbReference type="InterPro" id="IPR045860">
    <property type="entry name" value="Snake_toxin-like_sf"/>
</dbReference>
<dbReference type="InterPro" id="IPR054131">
    <property type="entry name" value="Toxin_cobra-type"/>
</dbReference>
<dbReference type="Pfam" id="PF21947">
    <property type="entry name" value="Toxin_cobra-type"/>
    <property type="match status" value="1"/>
</dbReference>
<dbReference type="SUPFAM" id="SSF57302">
    <property type="entry name" value="Snake toxin-like"/>
    <property type="match status" value="1"/>
</dbReference>
<protein>
    <recommendedName>
        <fullName>Short neurotoxin D2A</fullName>
    </recommendedName>
</protein>
<proteinExistence type="evidence at protein level"/>